<comment type="function">
    <text evidence="2">RNA-dependent RNA polymerase which is responsible for replication and transcription of virus RNA segments. The transcription of viral mRNAs occurs by a unique mechanism called cap-snatching. 5' methylated caps of cellular mRNAs are cleaved after 10-13 nucleotides by PA. In turn, these short capped RNAs are used as primers by PB1 for transcription of viral mRNAs. During virus replication, PB1 initiates RNA synthesis and copy vRNA into complementary RNA (cRNA) which in turn serves as a template for the production of more vRNAs.</text>
</comment>
<comment type="catalytic activity">
    <reaction evidence="2">
        <text>RNA(n) + a ribonucleoside 5'-triphosphate = RNA(n+1) + diphosphate</text>
        <dbReference type="Rhea" id="RHEA:21248"/>
        <dbReference type="Rhea" id="RHEA-COMP:14527"/>
        <dbReference type="Rhea" id="RHEA-COMP:17342"/>
        <dbReference type="ChEBI" id="CHEBI:33019"/>
        <dbReference type="ChEBI" id="CHEBI:61557"/>
        <dbReference type="ChEBI" id="CHEBI:140395"/>
        <dbReference type="EC" id="2.7.7.48"/>
    </reaction>
</comment>
<comment type="subunit">
    <text evidence="1 2">Influenza RNA polymerase is composed of three subunits: PB1, PB2 and PA. Interacts (via N-terminus) with PA (via C-terminus). Interacts (via C-terminus) with PB2 (via N-terminus); this interaction is essential for transcription initiation. Interacts (via C-terminus) with human PKP2 (via N-terminus); the interaction competitively inhibits the interaction between the RNA polymerase subunits PB1 and PB2 (By similarity).</text>
</comment>
<comment type="subcellular location">
    <subcellularLocation>
        <location evidence="2">Host nucleus</location>
    </subcellularLocation>
    <subcellularLocation>
        <location evidence="2">Host cytoplasm</location>
    </subcellularLocation>
</comment>
<comment type="PTM">
    <text evidence="2">Phosphorylated by host PRKCA.</text>
</comment>
<comment type="similarity">
    <text evidence="2">Belongs to the influenza viruses polymerase PB1 family.</text>
</comment>
<evidence type="ECO:0000250" key="1">
    <source>
        <dbReference type="UniProtKB" id="P03431"/>
    </source>
</evidence>
<evidence type="ECO:0000255" key="2">
    <source>
        <dbReference type="HAMAP-Rule" id="MF_04065"/>
    </source>
</evidence>
<evidence type="ECO:0000256" key="3">
    <source>
        <dbReference type="SAM" id="MobiDB-lite"/>
    </source>
</evidence>
<proteinExistence type="inferred from homology"/>
<gene>
    <name evidence="2" type="primary">PB1</name>
</gene>
<sequence length="757" mass="86612">MDVNPTLLFLKVPAQNAISTTFPYTGDPPYSHGTGTGYTMDTVNRTHQYSERGRWTKNTETGAPQLNPIDGPLPKDNEPSGYAQTDCVLEAMAFLEESHPGIFENSCIETMEVVQQTRVDKLTQGRQTYDWTLNRNQPAATALANTIEVFRSNGLKANESGRLIDFLKDVMESMDREEVEITTHFQRKRRVRDNVTKKMVTQRTIGKKKHRLNKRSYLIRALTLNTMTKDAERGKLKRRAIATPGMQIRGFVYFVETLARSICEKLEQSGLPVGGNEKKAKLANVVRKMMTNSQDTEISFTITGDNTKWNENQNPRMFLAMITYITRNQPEWFRNILSIAPIMFSNKMARLGKGYMFESKSMKLRTQIPAEMLANIDLKYFNDSTRKKIEKIRPLLIDGTASLSPGMMMGMFNMLSTVLGVSILNLGQKRYTKTTYWWDGLQSSDDFALIVNAPNYAGIQAGVDRFYRTCKLLGINMSKKKSYMNRTGTFEFTSFFYRYGFVANFSMELPSFGVSGINESADMSIGVTVIKNNMINNDLGPATAQMALQLFIKDYRYTYRCHRGDTQIQTRRSFEIKKLWDQTRSKAGLLVSDGGPNLYNIRNLHIPEVCLKWELMDEDYQGRLCNPLNPFVSHKEIESVNNAVMMPAHGPAKNMEYDAVATTHSWVPKRNRSILNTSQRGILEDEQMYQRCCNLFEKFFPSSSYRRPVGISSMVEAMVSRARIDARIDFESGRIKKEEFTEIMKTCSTIEELRRQK</sequence>
<keyword id="KW-1262">Eukaryotic host gene expression shutoff by virus</keyword>
<keyword id="KW-1191">Eukaryotic host transcription shutoff by virus</keyword>
<keyword id="KW-1035">Host cytoplasm</keyword>
<keyword id="KW-1190">Host gene expression shutoff by virus</keyword>
<keyword id="KW-1048">Host nucleus</keyword>
<keyword id="KW-0945">Host-virus interaction</keyword>
<keyword id="KW-1104">Inhibition of host RNA polymerase II by virus</keyword>
<keyword id="KW-0547">Nucleotide-binding</keyword>
<keyword id="KW-0548">Nucleotidyltransferase</keyword>
<keyword id="KW-0597">Phosphoprotein</keyword>
<keyword id="KW-0696">RNA-directed RNA polymerase</keyword>
<keyword id="KW-0808">Transferase</keyword>
<keyword id="KW-0693">Viral RNA replication</keyword>
<keyword id="KW-1195">Viral transcription</keyword>
<organism>
    <name type="scientific">Influenza A virus (strain A/India/6263/1980 H1N1)</name>
    <dbReference type="NCBI Taxonomy" id="393562"/>
    <lineage>
        <taxon>Viruses</taxon>
        <taxon>Riboviria</taxon>
        <taxon>Orthornavirae</taxon>
        <taxon>Negarnaviricota</taxon>
        <taxon>Polyploviricotina</taxon>
        <taxon>Insthoviricetes</taxon>
        <taxon>Articulavirales</taxon>
        <taxon>Orthomyxoviridae</taxon>
        <taxon>Alphainfluenzavirus</taxon>
        <taxon>Alphainfluenzavirus influenzae</taxon>
        <taxon>Influenza A virus</taxon>
    </lineage>
</organism>
<dbReference type="EC" id="2.7.7.48" evidence="2"/>
<dbReference type="EMBL" id="CY020459">
    <property type="protein sequence ID" value="ABO38370.1"/>
    <property type="molecule type" value="Viral_cRNA"/>
</dbReference>
<dbReference type="SMR" id="A4GCK5"/>
<dbReference type="Proteomes" id="UP000008580">
    <property type="component" value="Genome"/>
</dbReference>
<dbReference type="GO" id="GO:0030430">
    <property type="term" value="C:host cell cytoplasm"/>
    <property type="evidence" value="ECO:0007669"/>
    <property type="project" value="UniProtKB-SubCell"/>
</dbReference>
<dbReference type="GO" id="GO:0042025">
    <property type="term" value="C:host cell nucleus"/>
    <property type="evidence" value="ECO:0007669"/>
    <property type="project" value="UniProtKB-SubCell"/>
</dbReference>
<dbReference type="GO" id="GO:0000166">
    <property type="term" value="F:nucleotide binding"/>
    <property type="evidence" value="ECO:0007669"/>
    <property type="project" value="UniProtKB-UniRule"/>
</dbReference>
<dbReference type="GO" id="GO:0003723">
    <property type="term" value="F:RNA binding"/>
    <property type="evidence" value="ECO:0007669"/>
    <property type="project" value="InterPro"/>
</dbReference>
<dbReference type="GO" id="GO:0003968">
    <property type="term" value="F:RNA-directed RNA polymerase activity"/>
    <property type="evidence" value="ECO:0007669"/>
    <property type="project" value="UniProtKB-UniRule"/>
</dbReference>
<dbReference type="GO" id="GO:0006351">
    <property type="term" value="P:DNA-templated transcription"/>
    <property type="evidence" value="ECO:0007669"/>
    <property type="project" value="UniProtKB-UniRule"/>
</dbReference>
<dbReference type="GO" id="GO:0039657">
    <property type="term" value="P:symbiont-mediated suppression of host gene expression"/>
    <property type="evidence" value="ECO:0007669"/>
    <property type="project" value="UniProtKB-KW"/>
</dbReference>
<dbReference type="GO" id="GO:0039523">
    <property type="term" value="P:symbiont-mediated suppression of host mRNA transcription via inhibition of RNA polymerase II activity"/>
    <property type="evidence" value="ECO:0007669"/>
    <property type="project" value="UniProtKB-UniRule"/>
</dbReference>
<dbReference type="GO" id="GO:0039694">
    <property type="term" value="P:viral RNA genome replication"/>
    <property type="evidence" value="ECO:0007669"/>
    <property type="project" value="UniProtKB-UniRule"/>
</dbReference>
<dbReference type="GO" id="GO:0019083">
    <property type="term" value="P:viral transcription"/>
    <property type="evidence" value="ECO:0007669"/>
    <property type="project" value="UniProtKB-KW"/>
</dbReference>
<dbReference type="Gene3D" id="6.10.140.720">
    <property type="match status" value="1"/>
</dbReference>
<dbReference type="HAMAP" id="MF_04065">
    <property type="entry name" value="INFV_RDRP"/>
    <property type="match status" value="1"/>
</dbReference>
<dbReference type="InterPro" id="IPR007099">
    <property type="entry name" value="RNA-dir_pol_NSvirus"/>
</dbReference>
<dbReference type="InterPro" id="IPR001407">
    <property type="entry name" value="RNA_pol_PB1_influenza"/>
</dbReference>
<dbReference type="Pfam" id="PF00602">
    <property type="entry name" value="Flu_PB1"/>
    <property type="match status" value="1"/>
</dbReference>
<dbReference type="PIRSF" id="PIRSF000827">
    <property type="entry name" value="RdRPol_OMV"/>
    <property type="match status" value="1"/>
</dbReference>
<dbReference type="PROSITE" id="PS50525">
    <property type="entry name" value="RDRP_SSRNA_NEG_SEG"/>
    <property type="match status" value="1"/>
</dbReference>
<feature type="chain" id="PRO_0000373056" description="RNA-directed RNA polymerase catalytic subunit">
    <location>
        <begin position="1"/>
        <end position="757"/>
    </location>
</feature>
<feature type="domain" description="RdRp catalytic" evidence="2">
    <location>
        <begin position="286"/>
        <end position="483"/>
    </location>
</feature>
<feature type="region of interest" description="Disordered" evidence="3">
    <location>
        <begin position="53"/>
        <end position="82"/>
    </location>
</feature>
<feature type="region of interest" description="Promoter-binding site" evidence="2">
    <location>
        <begin position="249"/>
        <end position="256"/>
    </location>
</feature>
<feature type="short sequence motif" description="Nuclear localization signal" evidence="2">
    <location>
        <begin position="187"/>
        <end position="195"/>
    </location>
</feature>
<feature type="short sequence motif" description="Nuclear localization signal" evidence="2">
    <location>
        <begin position="203"/>
        <end position="216"/>
    </location>
</feature>
<reference key="1">
    <citation type="submission" date="2007-03" db="EMBL/GenBank/DDBJ databases">
        <title>The NIAID influenza genome sequencing project.</title>
        <authorList>
            <person name="Ghedin E."/>
            <person name="Spiro D."/>
            <person name="Miller N."/>
            <person name="Zaborsky J."/>
            <person name="Feldblyum T."/>
            <person name="Subbu V."/>
            <person name="Shumway M."/>
            <person name="Sparenborg J."/>
            <person name="Groveman L."/>
            <person name="Halpin R."/>
            <person name="Sitz J."/>
            <person name="Koo H."/>
            <person name="Salzberg S.L."/>
            <person name="Webster R.G."/>
            <person name="Hoffmann E."/>
            <person name="Krauss S."/>
            <person name="Naeve C."/>
            <person name="Bao Y."/>
            <person name="Bolotov P."/>
            <person name="Dernovoy D."/>
            <person name="Kiryutin B."/>
            <person name="Lipman D.J."/>
            <person name="Tatusova T."/>
        </authorList>
    </citation>
    <scope>NUCLEOTIDE SEQUENCE [GENOMIC RNA]</scope>
</reference>
<reference key="2">
    <citation type="submission" date="2007-03" db="EMBL/GenBank/DDBJ databases">
        <authorList>
            <consortium name="The NIAID Influenza Genome Sequencing Consortium"/>
        </authorList>
    </citation>
    <scope>NUCLEOTIDE SEQUENCE [GENOMIC RNA]</scope>
</reference>
<name>RDRP_I80AA</name>
<accession>A4GCK5</accession>
<organismHost>
    <name type="scientific">Aves</name>
    <dbReference type="NCBI Taxonomy" id="8782"/>
</organismHost>
<organismHost>
    <name type="scientific">Homo sapiens</name>
    <name type="common">Human</name>
    <dbReference type="NCBI Taxonomy" id="9606"/>
</organismHost>
<organismHost>
    <name type="scientific">Sus scrofa</name>
    <name type="common">Pig</name>
    <dbReference type="NCBI Taxonomy" id="9823"/>
</organismHost>
<protein>
    <recommendedName>
        <fullName evidence="2">RNA-directed RNA polymerase catalytic subunit</fullName>
        <ecNumber evidence="2">2.7.7.48</ecNumber>
    </recommendedName>
    <alternativeName>
        <fullName evidence="2">Polymerase basic protein 1</fullName>
        <shortName evidence="2">PB1</shortName>
    </alternativeName>
    <alternativeName>
        <fullName evidence="2">RNA-directed RNA polymerase subunit P1</fullName>
    </alternativeName>
</protein>